<gene>
    <name evidence="1" type="primary">dapE</name>
    <name type="ordered locus">CV_1456</name>
</gene>
<evidence type="ECO:0000255" key="1">
    <source>
        <dbReference type="HAMAP-Rule" id="MF_01690"/>
    </source>
</evidence>
<proteinExistence type="inferred from homology"/>
<dbReference type="EC" id="3.5.1.18" evidence="1"/>
<dbReference type="EMBL" id="AE016825">
    <property type="protein sequence ID" value="AAQ59131.1"/>
    <property type="molecule type" value="Genomic_DNA"/>
</dbReference>
<dbReference type="RefSeq" id="WP_011135008.1">
    <property type="nucleotide sequence ID" value="NC_005085.1"/>
</dbReference>
<dbReference type="SMR" id="Q7NY19"/>
<dbReference type="STRING" id="243365.CV_1456"/>
<dbReference type="KEGG" id="cvi:CV_1456"/>
<dbReference type="eggNOG" id="COG0624">
    <property type="taxonomic scope" value="Bacteria"/>
</dbReference>
<dbReference type="HOGENOM" id="CLU_021802_4_0_4"/>
<dbReference type="OrthoDB" id="9809784at2"/>
<dbReference type="UniPathway" id="UPA00034">
    <property type="reaction ID" value="UER00021"/>
</dbReference>
<dbReference type="Proteomes" id="UP000001424">
    <property type="component" value="Chromosome"/>
</dbReference>
<dbReference type="GO" id="GO:0008777">
    <property type="term" value="F:acetylornithine deacetylase activity"/>
    <property type="evidence" value="ECO:0007669"/>
    <property type="project" value="TreeGrafter"/>
</dbReference>
<dbReference type="GO" id="GO:0050897">
    <property type="term" value="F:cobalt ion binding"/>
    <property type="evidence" value="ECO:0007669"/>
    <property type="project" value="UniProtKB-UniRule"/>
</dbReference>
<dbReference type="GO" id="GO:0009014">
    <property type="term" value="F:succinyl-diaminopimelate desuccinylase activity"/>
    <property type="evidence" value="ECO:0007669"/>
    <property type="project" value="UniProtKB-UniRule"/>
</dbReference>
<dbReference type="GO" id="GO:0008270">
    <property type="term" value="F:zinc ion binding"/>
    <property type="evidence" value="ECO:0007669"/>
    <property type="project" value="UniProtKB-UniRule"/>
</dbReference>
<dbReference type="GO" id="GO:0019877">
    <property type="term" value="P:diaminopimelate biosynthetic process"/>
    <property type="evidence" value="ECO:0007669"/>
    <property type="project" value="UniProtKB-UniRule"/>
</dbReference>
<dbReference type="GO" id="GO:0006526">
    <property type="term" value="P:L-arginine biosynthetic process"/>
    <property type="evidence" value="ECO:0007669"/>
    <property type="project" value="TreeGrafter"/>
</dbReference>
<dbReference type="GO" id="GO:0009089">
    <property type="term" value="P:lysine biosynthetic process via diaminopimelate"/>
    <property type="evidence" value="ECO:0007669"/>
    <property type="project" value="UniProtKB-UniRule"/>
</dbReference>
<dbReference type="CDD" id="cd03891">
    <property type="entry name" value="M20_DapE_proteobac"/>
    <property type="match status" value="1"/>
</dbReference>
<dbReference type="FunFam" id="3.30.70.360:FF:000011">
    <property type="entry name" value="Succinyl-diaminopimelate desuccinylase"/>
    <property type="match status" value="1"/>
</dbReference>
<dbReference type="FunFam" id="3.40.630.10:FF:000005">
    <property type="entry name" value="Succinyl-diaminopimelate desuccinylase"/>
    <property type="match status" value="1"/>
</dbReference>
<dbReference type="Gene3D" id="3.30.70.360">
    <property type="match status" value="1"/>
</dbReference>
<dbReference type="Gene3D" id="3.40.630.10">
    <property type="entry name" value="Zn peptidases"/>
    <property type="match status" value="2"/>
</dbReference>
<dbReference type="HAMAP" id="MF_01690">
    <property type="entry name" value="DapE"/>
    <property type="match status" value="1"/>
</dbReference>
<dbReference type="InterPro" id="IPR036264">
    <property type="entry name" value="Bact_exopeptidase_dim_dom"/>
</dbReference>
<dbReference type="InterPro" id="IPR005941">
    <property type="entry name" value="DapE_proteobac"/>
</dbReference>
<dbReference type="InterPro" id="IPR002933">
    <property type="entry name" value="Peptidase_M20"/>
</dbReference>
<dbReference type="InterPro" id="IPR011650">
    <property type="entry name" value="Peptidase_M20_dimer"/>
</dbReference>
<dbReference type="InterPro" id="IPR050072">
    <property type="entry name" value="Peptidase_M20A"/>
</dbReference>
<dbReference type="NCBIfam" id="TIGR01246">
    <property type="entry name" value="dapE_proteo"/>
    <property type="match status" value="1"/>
</dbReference>
<dbReference type="NCBIfam" id="NF009557">
    <property type="entry name" value="PRK13009.1"/>
    <property type="match status" value="1"/>
</dbReference>
<dbReference type="PANTHER" id="PTHR43808">
    <property type="entry name" value="ACETYLORNITHINE DEACETYLASE"/>
    <property type="match status" value="1"/>
</dbReference>
<dbReference type="PANTHER" id="PTHR43808:SF31">
    <property type="entry name" value="N-ACETYL-L-CITRULLINE DEACETYLASE"/>
    <property type="match status" value="1"/>
</dbReference>
<dbReference type="Pfam" id="PF07687">
    <property type="entry name" value="M20_dimer"/>
    <property type="match status" value="1"/>
</dbReference>
<dbReference type="Pfam" id="PF01546">
    <property type="entry name" value="Peptidase_M20"/>
    <property type="match status" value="1"/>
</dbReference>
<dbReference type="SUPFAM" id="SSF55031">
    <property type="entry name" value="Bacterial exopeptidase dimerisation domain"/>
    <property type="match status" value="1"/>
</dbReference>
<dbReference type="SUPFAM" id="SSF53187">
    <property type="entry name" value="Zn-dependent exopeptidases"/>
    <property type="match status" value="1"/>
</dbReference>
<dbReference type="PROSITE" id="PS00759">
    <property type="entry name" value="ARGE_DAPE_CPG2_2"/>
    <property type="match status" value="1"/>
</dbReference>
<protein>
    <recommendedName>
        <fullName evidence="1">Succinyl-diaminopimelate desuccinylase</fullName>
        <shortName evidence="1">SDAP desuccinylase</shortName>
        <ecNumber evidence="1">3.5.1.18</ecNumber>
    </recommendedName>
    <alternativeName>
        <fullName evidence="1">N-succinyl-LL-2,6-diaminoheptanedioate amidohydrolase</fullName>
    </alternativeName>
</protein>
<keyword id="KW-0028">Amino-acid biosynthesis</keyword>
<keyword id="KW-0170">Cobalt</keyword>
<keyword id="KW-0220">Diaminopimelate biosynthesis</keyword>
<keyword id="KW-0378">Hydrolase</keyword>
<keyword id="KW-0457">Lysine biosynthesis</keyword>
<keyword id="KW-0479">Metal-binding</keyword>
<keyword id="KW-1185">Reference proteome</keyword>
<keyword id="KW-0862">Zinc</keyword>
<organism>
    <name type="scientific">Chromobacterium violaceum (strain ATCC 12472 / DSM 30191 / JCM 1249 / CCUG 213 / NBRC 12614 / NCIMB 9131 / NCTC 9757 / MK)</name>
    <dbReference type="NCBI Taxonomy" id="243365"/>
    <lineage>
        <taxon>Bacteria</taxon>
        <taxon>Pseudomonadati</taxon>
        <taxon>Pseudomonadota</taxon>
        <taxon>Betaproteobacteria</taxon>
        <taxon>Neisseriales</taxon>
        <taxon>Chromobacteriaceae</taxon>
        <taxon>Chromobacterium</taxon>
    </lineage>
</organism>
<name>DAPE_CHRVO</name>
<comment type="function">
    <text evidence="1">Catalyzes the hydrolysis of N-succinyl-L,L-diaminopimelic acid (SDAP), forming succinate and LL-2,6-diaminopimelate (DAP), an intermediate involved in the bacterial biosynthesis of lysine and meso-diaminopimelic acid, an essential component of bacterial cell walls.</text>
</comment>
<comment type="catalytic activity">
    <reaction evidence="1">
        <text>N-succinyl-(2S,6S)-2,6-diaminopimelate + H2O = (2S,6S)-2,6-diaminopimelate + succinate</text>
        <dbReference type="Rhea" id="RHEA:22608"/>
        <dbReference type="ChEBI" id="CHEBI:15377"/>
        <dbReference type="ChEBI" id="CHEBI:30031"/>
        <dbReference type="ChEBI" id="CHEBI:57609"/>
        <dbReference type="ChEBI" id="CHEBI:58087"/>
        <dbReference type="EC" id="3.5.1.18"/>
    </reaction>
</comment>
<comment type="cofactor">
    <cofactor evidence="1">
        <name>Zn(2+)</name>
        <dbReference type="ChEBI" id="CHEBI:29105"/>
    </cofactor>
    <cofactor evidence="1">
        <name>Co(2+)</name>
        <dbReference type="ChEBI" id="CHEBI:48828"/>
    </cofactor>
    <text evidence="1">Binds 2 Zn(2+) or Co(2+) ions per subunit.</text>
</comment>
<comment type="pathway">
    <text evidence="1">Amino-acid biosynthesis; L-lysine biosynthesis via DAP pathway; LL-2,6-diaminopimelate from (S)-tetrahydrodipicolinate (succinylase route): step 3/3.</text>
</comment>
<comment type="subunit">
    <text evidence="1">Homodimer.</text>
</comment>
<comment type="similarity">
    <text evidence="1">Belongs to the peptidase M20A family. DapE subfamily.</text>
</comment>
<reference key="1">
    <citation type="journal article" date="2003" name="Proc. Natl. Acad. Sci. U.S.A.">
        <title>The complete genome sequence of Chromobacterium violaceum reveals remarkable and exploitable bacterial adaptability.</title>
        <authorList>
            <person name="Vasconcelos A.T.R."/>
            <person name="de Almeida D.F."/>
            <person name="Hungria M."/>
            <person name="Guimaraes C.T."/>
            <person name="Antonio R.V."/>
            <person name="Almeida F.C."/>
            <person name="de Almeida L.G.P."/>
            <person name="de Almeida R."/>
            <person name="Alves-Gomes J.A."/>
            <person name="Andrade E.M."/>
            <person name="Araripe J."/>
            <person name="de Araujo M.F.F."/>
            <person name="Astolfi-Filho S."/>
            <person name="Azevedo V."/>
            <person name="Baptista A.J."/>
            <person name="Bataus L.A.M."/>
            <person name="Batista J.S."/>
            <person name="Belo A."/>
            <person name="van den Berg C."/>
            <person name="Bogo M."/>
            <person name="Bonatto S."/>
            <person name="Bordignon J."/>
            <person name="Brigido M.M."/>
            <person name="Brito C.A."/>
            <person name="Brocchi M."/>
            <person name="Burity H.A."/>
            <person name="Camargo A.A."/>
            <person name="Cardoso D.D.P."/>
            <person name="Carneiro N.P."/>
            <person name="Carraro D.M."/>
            <person name="Carvalho C.M.B."/>
            <person name="Cascardo J.C.M."/>
            <person name="Cavada B.S."/>
            <person name="Chueire L.M.O."/>
            <person name="Creczynski-Pasa T.B."/>
            <person name="Cunha-Junior N.C."/>
            <person name="Fagundes N."/>
            <person name="Falcao C.L."/>
            <person name="Fantinatti F."/>
            <person name="Farias I.P."/>
            <person name="Felipe M.S.S."/>
            <person name="Ferrari L.P."/>
            <person name="Ferro J.A."/>
            <person name="Ferro M.I.T."/>
            <person name="Franco G.R."/>
            <person name="Freitas N.S.A."/>
            <person name="Furlan L.R."/>
            <person name="Gazzinelli R.T."/>
            <person name="Gomes E.A."/>
            <person name="Goncalves P.R."/>
            <person name="Grangeiro T.B."/>
            <person name="Grattapaglia D."/>
            <person name="Grisard E.C."/>
            <person name="Hanna E.S."/>
            <person name="Jardim S.N."/>
            <person name="Laurino J."/>
            <person name="Leoi L.C.T."/>
            <person name="Lima L.F.A."/>
            <person name="Loureiro M.F."/>
            <person name="Lyra M.C.C.P."/>
            <person name="Madeira H.M.F."/>
            <person name="Manfio G.P."/>
            <person name="Maranhao A.Q."/>
            <person name="Martins W.S."/>
            <person name="di Mauro S.M.Z."/>
            <person name="de Medeiros S.R.B."/>
            <person name="Meissner R.V."/>
            <person name="Moreira M.A.M."/>
            <person name="Nascimento F.F."/>
            <person name="Nicolas M.F."/>
            <person name="Oliveira J.G."/>
            <person name="Oliveira S.C."/>
            <person name="Paixao R.F.C."/>
            <person name="Parente J.A."/>
            <person name="Pedrosa F.O."/>
            <person name="Pena S.D.J."/>
            <person name="Pereira J.O."/>
            <person name="Pereira M."/>
            <person name="Pinto L.S.R.C."/>
            <person name="Pinto L.S."/>
            <person name="Porto J.I.R."/>
            <person name="Potrich D.P."/>
            <person name="Ramalho-Neto C.E."/>
            <person name="Reis A.M.M."/>
            <person name="Rigo L.U."/>
            <person name="Rondinelli E."/>
            <person name="Santos E.B.P."/>
            <person name="Santos F.R."/>
            <person name="Schneider M.P.C."/>
            <person name="Seuanez H.N."/>
            <person name="Silva A.M.R."/>
            <person name="da Silva A.L.C."/>
            <person name="Silva D.W."/>
            <person name="Silva R."/>
            <person name="Simoes I.C."/>
            <person name="Simon D."/>
            <person name="Soares C.M.A."/>
            <person name="Soares R.B.A."/>
            <person name="Souza E.M."/>
            <person name="Souza K.R.L."/>
            <person name="Souza R.C."/>
            <person name="Steffens M.B.R."/>
            <person name="Steindel M."/>
            <person name="Teixeira S.R."/>
            <person name="Urmenyi T."/>
            <person name="Vettore A."/>
            <person name="Wassem R."/>
            <person name="Zaha A."/>
            <person name="Simpson A.J.G."/>
        </authorList>
    </citation>
    <scope>NUCLEOTIDE SEQUENCE [LARGE SCALE GENOMIC DNA]</scope>
    <source>
        <strain>ATCC 12472 / DSM 30191 / JCM 1249 / CCUG 213 / NBRC 12614 / NCIMB 9131 / NCTC 9757 / MK</strain>
    </source>
</reference>
<sequence length="377" mass="40805">MSATLDLARELIRRDSVTPRDEGCQALMIERLEAIGFKVEKMRHGDVDNFWARRGDAGPLFCFAGHTDVVPTGPLDKWDSPPFEPTVRNGLLYGRGAADMKASLAAFVTACERFVAEHPDHKGSLALLITSDEEGVAVDGTVKVVDALEARGETIDYCIVGEPTSEQRLGDTVKNGRRGSLSGRLVVHGIQGHIAYPQLAKNPIHLMAPALAELAATRWDEGNAFFPPTSWQVSNIQAGTGATNVIPGHCELLFNFRFSPESTAESLKERVYQILDKHGLGYELHWQLSGQPFITPPGALTDALSAAIAEVSGAKAELSTTGGTSDGRFIKRIARELVEFGPINATIHKLNECVEVADVEPLAAIYRRTLEGLLAKA</sequence>
<feature type="chain" id="PRO_0000375530" description="Succinyl-diaminopimelate desuccinylase">
    <location>
        <begin position="1"/>
        <end position="377"/>
    </location>
</feature>
<feature type="active site" evidence="1">
    <location>
        <position position="68"/>
    </location>
</feature>
<feature type="active site" description="Proton acceptor" evidence="1">
    <location>
        <position position="133"/>
    </location>
</feature>
<feature type="binding site" evidence="1">
    <location>
        <position position="66"/>
    </location>
    <ligand>
        <name>Zn(2+)</name>
        <dbReference type="ChEBI" id="CHEBI:29105"/>
        <label>1</label>
    </ligand>
</feature>
<feature type="binding site" evidence="1">
    <location>
        <position position="99"/>
    </location>
    <ligand>
        <name>Zn(2+)</name>
        <dbReference type="ChEBI" id="CHEBI:29105"/>
        <label>1</label>
    </ligand>
</feature>
<feature type="binding site" evidence="1">
    <location>
        <position position="99"/>
    </location>
    <ligand>
        <name>Zn(2+)</name>
        <dbReference type="ChEBI" id="CHEBI:29105"/>
        <label>2</label>
    </ligand>
</feature>
<feature type="binding site" evidence="1">
    <location>
        <position position="134"/>
    </location>
    <ligand>
        <name>Zn(2+)</name>
        <dbReference type="ChEBI" id="CHEBI:29105"/>
        <label>2</label>
    </ligand>
</feature>
<feature type="binding site" evidence="1">
    <location>
        <position position="162"/>
    </location>
    <ligand>
        <name>Zn(2+)</name>
        <dbReference type="ChEBI" id="CHEBI:29105"/>
        <label>1</label>
    </ligand>
</feature>
<feature type="binding site" evidence="1">
    <location>
        <position position="348"/>
    </location>
    <ligand>
        <name>Zn(2+)</name>
        <dbReference type="ChEBI" id="CHEBI:29105"/>
        <label>2</label>
    </ligand>
</feature>
<accession>Q7NY19</accession>